<organism>
    <name type="scientific">Dothistroma septosporum (strain NZE10 / CBS 128990)</name>
    <name type="common">Red band needle blight fungus</name>
    <name type="synonym">Mycosphaerella pini</name>
    <dbReference type="NCBI Taxonomy" id="675120"/>
    <lineage>
        <taxon>Eukaryota</taxon>
        <taxon>Fungi</taxon>
        <taxon>Dikarya</taxon>
        <taxon>Ascomycota</taxon>
        <taxon>Pezizomycotina</taxon>
        <taxon>Dothideomycetes</taxon>
        <taxon>Dothideomycetidae</taxon>
        <taxon>Mycosphaerellales</taxon>
        <taxon>Mycosphaerellaceae</taxon>
        <taxon>Dothistroma</taxon>
    </lineage>
</organism>
<accession>N1PJ97</accession>
<keyword id="KW-0183">Conidiation</keyword>
<keyword id="KW-0238">DNA-binding</keyword>
<keyword id="KW-0539">Nucleus</keyword>
<keyword id="KW-1185">Reference proteome</keyword>
<keyword id="KW-0749">Sporulation</keyword>
<keyword id="KW-0804">Transcription</keyword>
<keyword id="KW-0805">Transcription regulation</keyword>
<dbReference type="EMBL" id="KB446541">
    <property type="protein sequence ID" value="EME42179.1"/>
    <property type="molecule type" value="Genomic_DNA"/>
</dbReference>
<dbReference type="SMR" id="N1PJ97"/>
<dbReference type="STRING" id="675120.N1PJ97"/>
<dbReference type="EnsemblFungi" id="EME42179">
    <property type="protein sequence ID" value="EME42179"/>
    <property type="gene ID" value="DOTSEDRAFT_45737"/>
</dbReference>
<dbReference type="eggNOG" id="ENOG502QW2C">
    <property type="taxonomic scope" value="Eukaryota"/>
</dbReference>
<dbReference type="HOGENOM" id="CLU_016460_0_0_1"/>
<dbReference type="OMA" id="HEAEYTH"/>
<dbReference type="OrthoDB" id="5407653at2759"/>
<dbReference type="Proteomes" id="UP000016933">
    <property type="component" value="Unassembled WGS sequence"/>
</dbReference>
<dbReference type="GO" id="GO:0005634">
    <property type="term" value="C:nucleus"/>
    <property type="evidence" value="ECO:0007669"/>
    <property type="project" value="UniProtKB-SubCell"/>
</dbReference>
<dbReference type="GO" id="GO:0003700">
    <property type="term" value="F:DNA-binding transcription factor activity"/>
    <property type="evidence" value="ECO:0007669"/>
    <property type="project" value="TreeGrafter"/>
</dbReference>
<dbReference type="GO" id="GO:0043565">
    <property type="term" value="F:sequence-specific DNA binding"/>
    <property type="evidence" value="ECO:0007669"/>
    <property type="project" value="TreeGrafter"/>
</dbReference>
<dbReference type="GO" id="GO:0048315">
    <property type="term" value="P:conidium formation"/>
    <property type="evidence" value="ECO:0007669"/>
    <property type="project" value="UniProtKB-KW"/>
</dbReference>
<dbReference type="GO" id="GO:0045944">
    <property type="term" value="P:positive regulation of transcription by RNA polymerase II"/>
    <property type="evidence" value="ECO:0007669"/>
    <property type="project" value="TreeGrafter"/>
</dbReference>
<dbReference type="GO" id="GO:0030435">
    <property type="term" value="P:sporulation resulting in formation of a cellular spore"/>
    <property type="evidence" value="ECO:0007669"/>
    <property type="project" value="UniProtKB-KW"/>
</dbReference>
<dbReference type="FunFam" id="3.10.260.10:FF:000003">
    <property type="entry name" value="Ascospore maturation 1 protein"/>
    <property type="match status" value="1"/>
</dbReference>
<dbReference type="Gene3D" id="3.10.260.10">
    <property type="entry name" value="Transcription regulator HTH, APSES-type DNA-binding domain"/>
    <property type="match status" value="1"/>
</dbReference>
<dbReference type="InterPro" id="IPR029790">
    <property type="entry name" value="EFG1/Phd1/StuA"/>
</dbReference>
<dbReference type="InterPro" id="IPR036887">
    <property type="entry name" value="HTH_APSES_sf"/>
</dbReference>
<dbReference type="InterPro" id="IPR018004">
    <property type="entry name" value="KilA/APSES_HTH"/>
</dbReference>
<dbReference type="InterPro" id="IPR003163">
    <property type="entry name" value="Tscrpt_reg_HTH_APSES-type"/>
</dbReference>
<dbReference type="PANTHER" id="PTHR47792">
    <property type="entry name" value="PROTEIN SOK2-RELATED"/>
    <property type="match status" value="1"/>
</dbReference>
<dbReference type="PANTHER" id="PTHR47792:SF1">
    <property type="entry name" value="PROTEIN SOK2-RELATED"/>
    <property type="match status" value="1"/>
</dbReference>
<dbReference type="Pfam" id="PF04383">
    <property type="entry name" value="KilA-N"/>
    <property type="match status" value="1"/>
</dbReference>
<dbReference type="SMART" id="SM01252">
    <property type="entry name" value="KilA-N"/>
    <property type="match status" value="1"/>
</dbReference>
<dbReference type="SUPFAM" id="SSF54616">
    <property type="entry name" value="DNA-binding domain of Mlu1-box binding protein MBP1"/>
    <property type="match status" value="1"/>
</dbReference>
<dbReference type="PROSITE" id="PS51299">
    <property type="entry name" value="HTH_APSES"/>
    <property type="match status" value="1"/>
</dbReference>
<sequence length="577" mass="62608">MNQPQPYMDQHAPAPPPASNMTQYSNYGAPQPLQPATHGYGAPTYPQYGQYGQSMPPMQAGHPVSAPMQGQMVNSLPLPTMSAPQQSGGTQQFQQSFDTTGQIAPHGMKPRVTATLWEDEGSLCFQVEANGVCVARREDNHMINGTKLLNVAGMTRGRRDGILKSEKTRHVVKIGPMHLKGVWIPFDRALDFANKEKITELLYPLFVHNIGALLYHPTNQARQSIGNATMAARRPESSQEYMRTPQGTQAPALTHHHSMSNPINASMPPQPHSIAPHPASGRPQLDRAHTFPTPPASASSMPMTNGNMPNSYEYGSAGAVNSASTPPSNSQGMPQYQTSQPPYTQSYSTPGSYSQPQYTHQQPGVQRFGNIHSSPDGVKTEMGPPARAGAENDHPDHKVGGYGGQQDAEGEHEGEYTHTSASYGARRLSYNYKPNPAPGPLHQDSSHVSPEMTHSPHQNGSGRATPRTTNPYTGYNNTPQRQNQLPSSNLNYVMSSDARAGAPNGQEYAQQAYQPAPQYPAMNGIKRGREDDDQVDPYGRPSSALGEHKRQRTDPGAMSARPISQPHSIKAGGAVRR</sequence>
<proteinExistence type="evidence at transcript level"/>
<comment type="function">
    <text evidence="1">Transcription factor that regulates asexual reproduction (By similarity). Binds the StuA-response elements (StRE) with the consensus sequence 5'-(A/T)CGCG(T/A)N(A/C)-3' at the promoters of target genes (By similarity).</text>
</comment>
<comment type="subcellular location">
    <subcellularLocation>
        <location evidence="1">Nucleus</location>
    </subcellularLocation>
</comment>
<comment type="induction">
    <text evidence="4">Expression is positively regulated by veA (PubMed:22227160).</text>
</comment>
<comment type="similarity">
    <text evidence="6">Belongs to the EFG1/PHD1/stuA family.</text>
</comment>
<evidence type="ECO:0000250" key="1">
    <source>
        <dbReference type="UniProtKB" id="P36011"/>
    </source>
</evidence>
<evidence type="ECO:0000255" key="2">
    <source>
        <dbReference type="PROSITE-ProRule" id="PRU00630"/>
    </source>
</evidence>
<evidence type="ECO:0000256" key="3">
    <source>
        <dbReference type="SAM" id="MobiDB-lite"/>
    </source>
</evidence>
<evidence type="ECO:0000269" key="4">
    <source>
    </source>
</evidence>
<evidence type="ECO:0000303" key="5">
    <source>
    </source>
</evidence>
<evidence type="ECO:0000305" key="6"/>
<protein>
    <recommendedName>
        <fullName evidence="6">Cell pattern formation-associated protein stuA</fullName>
    </recommendedName>
    <alternativeName>
        <fullName evidence="1">Stunted protein A</fullName>
    </alternativeName>
</protein>
<name>STUA_DOTSN</name>
<gene>
    <name evidence="5" type="primary">stuA</name>
    <name type="ORF">DOTSEDRAFT_45737</name>
</gene>
<reference key="1">
    <citation type="journal article" date="2012" name="PLoS Genet.">
        <title>The genomes of the fungal plant pathogens Cladosporium fulvum and Dothistroma septosporum reveal adaptation to different hosts and lifestyles but also signatures of common ancestry.</title>
        <authorList>
            <person name="de Wit P.J.G.M."/>
            <person name="van der Burgt A."/>
            <person name="Oekmen B."/>
            <person name="Stergiopoulos I."/>
            <person name="Abd-Elsalam K.A."/>
            <person name="Aerts A.L."/>
            <person name="Bahkali A.H."/>
            <person name="Beenen H.G."/>
            <person name="Chettri P."/>
            <person name="Cox M.P."/>
            <person name="Datema E."/>
            <person name="de Vries R.P."/>
            <person name="Dhillon B."/>
            <person name="Ganley A.R."/>
            <person name="Griffiths S.A."/>
            <person name="Guo Y."/>
            <person name="Hamelin R.C."/>
            <person name="Henrissat B."/>
            <person name="Kabir M.S."/>
            <person name="Jashni M.K."/>
            <person name="Kema G."/>
            <person name="Klaubauf S."/>
            <person name="Lapidus A."/>
            <person name="Levasseur A."/>
            <person name="Lindquist E."/>
            <person name="Mehrabi R."/>
            <person name="Ohm R.A."/>
            <person name="Owen T.J."/>
            <person name="Salamov A."/>
            <person name="Schwelm A."/>
            <person name="Schijlen E."/>
            <person name="Sun H."/>
            <person name="van den Burg H.A."/>
            <person name="van Ham R.C.H.J."/>
            <person name="Zhang S."/>
            <person name="Goodwin S.B."/>
            <person name="Grigoriev I.V."/>
            <person name="Collemare J."/>
            <person name="Bradshaw R.E."/>
        </authorList>
    </citation>
    <scope>NUCLEOTIDE SEQUENCE [LARGE SCALE GENOMIC DNA]</scope>
    <source>
        <strain>NZE10 / CBS 128990</strain>
    </source>
</reference>
<reference key="2">
    <citation type="journal article" date="2012" name="PLoS Pathog.">
        <title>Diverse lifestyles and strategies of plant pathogenesis encoded in the genomes of eighteen Dothideomycetes fungi.</title>
        <authorList>
            <person name="Ohm R.A."/>
            <person name="Feau N."/>
            <person name="Henrissat B."/>
            <person name="Schoch C.L."/>
            <person name="Horwitz B.A."/>
            <person name="Barry K.W."/>
            <person name="Condon B.J."/>
            <person name="Copeland A.C."/>
            <person name="Dhillon B."/>
            <person name="Glaser F."/>
            <person name="Hesse C.N."/>
            <person name="Kosti I."/>
            <person name="LaButti K."/>
            <person name="Lindquist E.A."/>
            <person name="Lucas S."/>
            <person name="Salamov A.A."/>
            <person name="Bradshaw R.E."/>
            <person name="Ciuffetti L."/>
            <person name="Hamelin R.C."/>
            <person name="Kema G.H.J."/>
            <person name="Lawrence C."/>
            <person name="Scott J.A."/>
            <person name="Spatafora J.W."/>
            <person name="Turgeon B.G."/>
            <person name="de Wit P.J.G.M."/>
            <person name="Zhong S."/>
            <person name="Goodwin S.B."/>
            <person name="Grigoriev I.V."/>
        </authorList>
    </citation>
    <scope>NUCLEOTIDE SEQUENCE [LARGE SCALE GENOMIC DNA]</scope>
    <source>
        <strain>NZE10 / CBS 128990</strain>
    </source>
</reference>
<reference key="3">
    <citation type="journal article" date="2012" name="Fungal Genet. Biol.">
        <title>The veA gene of the pine needle pathogen Dothistroma septosporum regulates sporulation and secondary metabolism.</title>
        <authorList>
            <person name="Chettri P."/>
            <person name="Calvo A.M."/>
            <person name="Cary J.W."/>
            <person name="Dhingra S."/>
            <person name="Guo Y."/>
            <person name="McDougal R.L."/>
            <person name="Bradshaw R.E."/>
        </authorList>
    </citation>
    <scope>INDUCTION</scope>
</reference>
<feature type="chain" id="PRO_0000435973" description="Cell pattern formation-associated protein stuA">
    <location>
        <begin position="1"/>
        <end position="577"/>
    </location>
</feature>
<feature type="domain" description="HTH APSES-type" evidence="2">
    <location>
        <begin position="111"/>
        <end position="217"/>
    </location>
</feature>
<feature type="DNA-binding region" description="H-T-H motif" evidence="2">
    <location>
        <begin position="145"/>
        <end position="166"/>
    </location>
</feature>
<feature type="region of interest" description="Disordered" evidence="3">
    <location>
        <begin position="1"/>
        <end position="41"/>
    </location>
</feature>
<feature type="region of interest" description="Disordered" evidence="3">
    <location>
        <begin position="228"/>
        <end position="487"/>
    </location>
</feature>
<feature type="region of interest" description="Disordered" evidence="3">
    <location>
        <begin position="518"/>
        <end position="577"/>
    </location>
</feature>
<feature type="region of interest" description="Nuclear localization domain" evidence="1">
    <location>
        <begin position="526"/>
        <end position="552"/>
    </location>
</feature>
<feature type="compositionally biased region" description="Polar residues" evidence="3">
    <location>
        <begin position="19"/>
        <end position="28"/>
    </location>
</feature>
<feature type="compositionally biased region" description="Polar residues" evidence="3">
    <location>
        <begin position="238"/>
        <end position="251"/>
    </location>
</feature>
<feature type="compositionally biased region" description="Polar residues" evidence="3">
    <location>
        <begin position="319"/>
        <end position="333"/>
    </location>
</feature>
<feature type="compositionally biased region" description="Low complexity" evidence="3">
    <location>
        <begin position="334"/>
        <end position="350"/>
    </location>
</feature>
<feature type="compositionally biased region" description="Polar residues" evidence="3">
    <location>
        <begin position="351"/>
        <end position="364"/>
    </location>
</feature>
<feature type="compositionally biased region" description="Basic and acidic residues" evidence="3">
    <location>
        <begin position="390"/>
        <end position="399"/>
    </location>
</feature>
<feature type="compositionally biased region" description="Low complexity" evidence="3">
    <location>
        <begin position="465"/>
        <end position="479"/>
    </location>
</feature>